<evidence type="ECO:0000255" key="1">
    <source>
        <dbReference type="PROSITE-ProRule" id="PRU00703"/>
    </source>
</evidence>
<evidence type="ECO:0000305" key="2"/>
<organism>
    <name type="scientific">Rickettsia rickettsii (strain Sheila Smith)</name>
    <dbReference type="NCBI Taxonomy" id="392021"/>
    <lineage>
        <taxon>Bacteria</taxon>
        <taxon>Pseudomonadati</taxon>
        <taxon>Pseudomonadota</taxon>
        <taxon>Alphaproteobacteria</taxon>
        <taxon>Rickettsiales</taxon>
        <taxon>Rickettsiaceae</taxon>
        <taxon>Rickettsieae</taxon>
        <taxon>Rickettsia</taxon>
        <taxon>spotted fever group</taxon>
    </lineage>
</organism>
<sequence length="299" mass="33940">MLKSSKKEDSSKKNQNNKLIFTVRKLFSPIKNFFRKTKTPDNFFGVIKRLKINSQKMTLDERNILANLLELEDKTIEDIMVPRSDIAAIKLTTNLEELSESIKLEVPHTRTLIYDGTLDNVVGFIHIKDLFKALATKQNGRLKKLIRKHIIAAPSMKLLDLLAKMRRERTHIAIVVDEYGGTDGLVTIEDLIEEIVGRIDDEHDQQLDSDNFKVINNSTIISNARVEVEVLEEIIGEKLHNDYDEFDTIGGLVLTRVSSVPAIGTRIDISENIEIEVTDATPRSLKQVKIRLKNGLNGQ</sequence>
<reference key="1">
    <citation type="submission" date="2007-09" db="EMBL/GenBank/DDBJ databases">
        <title>Complete genome sequence of Rickettsia rickettsii.</title>
        <authorList>
            <person name="Madan A."/>
            <person name="Fahey J."/>
            <person name="Helton E."/>
            <person name="Ketteman M."/>
            <person name="Madan A."/>
            <person name="Rodrigues S."/>
            <person name="Sanchez A."/>
            <person name="Dasch G."/>
            <person name="Eremeeva M."/>
        </authorList>
    </citation>
    <scope>NUCLEOTIDE SEQUENCE [LARGE SCALE GENOMIC DNA]</scope>
    <source>
        <strain>Sheila Smith</strain>
    </source>
</reference>
<accession>A8GTI4</accession>
<gene>
    <name type="primary">tlyC</name>
    <name type="ordered locus">A1G_06280</name>
</gene>
<keyword id="KW-0129">CBS domain</keyword>
<keyword id="KW-0677">Repeat</keyword>
<feature type="chain" id="PRO_0000319033" description="Hemolysin C homolog">
    <location>
        <begin position="1"/>
        <end position="299"/>
    </location>
</feature>
<feature type="domain" description="CBS 1" evidence="1">
    <location>
        <begin position="80"/>
        <end position="142"/>
    </location>
</feature>
<feature type="domain" description="CBS 2" evidence="1">
    <location>
        <begin position="145"/>
        <end position="202"/>
    </location>
</feature>
<proteinExistence type="inferred from homology"/>
<name>HLYC_RICRS</name>
<comment type="miscellaneous">
    <text>Despite the presence of the tlyC gene, the true SFG rickettsiae are non-hemolytic.</text>
</comment>
<comment type="similarity">
    <text evidence="2">Belongs to the UPF0053 family. Hemolysin C subfamily.</text>
</comment>
<protein>
    <recommendedName>
        <fullName>Hemolysin C homolog</fullName>
    </recommendedName>
</protein>
<dbReference type="EMBL" id="CP000848">
    <property type="protein sequence ID" value="ABV76709.1"/>
    <property type="molecule type" value="Genomic_DNA"/>
</dbReference>
<dbReference type="RefSeq" id="WP_012151259.1">
    <property type="nucleotide sequence ID" value="NZ_CP121767.1"/>
</dbReference>
<dbReference type="SMR" id="A8GTI4"/>
<dbReference type="GeneID" id="79937768"/>
<dbReference type="KEGG" id="rri:A1G_06280"/>
<dbReference type="HOGENOM" id="CLU_015237_3_1_5"/>
<dbReference type="Proteomes" id="UP000006832">
    <property type="component" value="Chromosome"/>
</dbReference>
<dbReference type="GO" id="GO:0005886">
    <property type="term" value="C:plasma membrane"/>
    <property type="evidence" value="ECO:0007669"/>
    <property type="project" value="TreeGrafter"/>
</dbReference>
<dbReference type="GO" id="GO:0050660">
    <property type="term" value="F:flavin adenine dinucleotide binding"/>
    <property type="evidence" value="ECO:0007669"/>
    <property type="project" value="InterPro"/>
</dbReference>
<dbReference type="CDD" id="cd04590">
    <property type="entry name" value="CBS_pair_CorC_HlyC_assoc"/>
    <property type="match status" value="1"/>
</dbReference>
<dbReference type="FunFam" id="3.10.580.10:FF:000002">
    <property type="entry name" value="Magnesium/cobalt efflux protein CorC"/>
    <property type="match status" value="1"/>
</dbReference>
<dbReference type="Gene3D" id="3.30.465.10">
    <property type="match status" value="1"/>
</dbReference>
<dbReference type="Gene3D" id="3.10.580.10">
    <property type="entry name" value="CBS-domain"/>
    <property type="match status" value="1"/>
</dbReference>
<dbReference type="InterPro" id="IPR000644">
    <property type="entry name" value="CBS_dom"/>
</dbReference>
<dbReference type="InterPro" id="IPR046342">
    <property type="entry name" value="CBS_dom_sf"/>
</dbReference>
<dbReference type="InterPro" id="IPR036318">
    <property type="entry name" value="FAD-bd_PCMH-like_sf"/>
</dbReference>
<dbReference type="InterPro" id="IPR016169">
    <property type="entry name" value="FAD-bd_PCMH_sub2"/>
</dbReference>
<dbReference type="InterPro" id="IPR044751">
    <property type="entry name" value="Ion_transp-like_CBS"/>
</dbReference>
<dbReference type="InterPro" id="IPR005170">
    <property type="entry name" value="Transptr-assoc_dom"/>
</dbReference>
<dbReference type="PANTHER" id="PTHR22777">
    <property type="entry name" value="HEMOLYSIN-RELATED"/>
    <property type="match status" value="1"/>
</dbReference>
<dbReference type="PANTHER" id="PTHR22777:SF27">
    <property type="entry name" value="MAGNESIUM AND COBALT EFFLUX PROTEIN CORC"/>
    <property type="match status" value="1"/>
</dbReference>
<dbReference type="Pfam" id="PF00571">
    <property type="entry name" value="CBS"/>
    <property type="match status" value="1"/>
</dbReference>
<dbReference type="Pfam" id="PF03471">
    <property type="entry name" value="CorC_HlyC"/>
    <property type="match status" value="1"/>
</dbReference>
<dbReference type="SMART" id="SM01091">
    <property type="entry name" value="CorC_HlyC"/>
    <property type="match status" value="1"/>
</dbReference>
<dbReference type="SUPFAM" id="SSF54631">
    <property type="entry name" value="CBS-domain pair"/>
    <property type="match status" value="1"/>
</dbReference>
<dbReference type="SUPFAM" id="SSF56176">
    <property type="entry name" value="FAD-binding/transporter-associated domain-like"/>
    <property type="match status" value="1"/>
</dbReference>
<dbReference type="PROSITE" id="PS51371">
    <property type="entry name" value="CBS"/>
    <property type="match status" value="2"/>
</dbReference>